<dbReference type="EC" id="4.1.1.20" evidence="2"/>
<dbReference type="EMBL" id="X17013">
    <property type="protein sequence ID" value="CAA34876.1"/>
    <property type="status" value="ALT_SEQ"/>
    <property type="molecule type" value="Genomic_DNA"/>
</dbReference>
<dbReference type="EMBL" id="L09228">
    <property type="protein sequence ID" value="AAA67473.1"/>
    <property type="molecule type" value="Genomic_DNA"/>
</dbReference>
<dbReference type="EMBL" id="D90189">
    <property type="protein sequence ID" value="BAA14211.1"/>
    <property type="status" value="ALT_INIT"/>
    <property type="molecule type" value="Genomic_DNA"/>
</dbReference>
<dbReference type="EMBL" id="D84432">
    <property type="protein sequence ID" value="BAA12662.1"/>
    <property type="status" value="ALT_INIT"/>
    <property type="molecule type" value="Genomic_DNA"/>
</dbReference>
<dbReference type="EMBL" id="AL009126">
    <property type="protein sequence ID" value="CAB14270.1"/>
    <property type="molecule type" value="Genomic_DNA"/>
</dbReference>
<dbReference type="PIR" id="S45535">
    <property type="entry name" value="JU0471"/>
</dbReference>
<dbReference type="RefSeq" id="NP_390219.1">
    <property type="nucleotide sequence ID" value="NC_000964.3"/>
</dbReference>
<dbReference type="RefSeq" id="WP_004398851.1">
    <property type="nucleotide sequence ID" value="NZ_OZ025638.1"/>
</dbReference>
<dbReference type="SMR" id="P23630"/>
<dbReference type="FunCoup" id="P23630">
    <property type="interactions" value="480"/>
</dbReference>
<dbReference type="STRING" id="224308.BSU23380"/>
<dbReference type="PaxDb" id="224308-BSU23380"/>
<dbReference type="EnsemblBacteria" id="CAB14270">
    <property type="protein sequence ID" value="CAB14270"/>
    <property type="gene ID" value="BSU_23380"/>
</dbReference>
<dbReference type="GeneID" id="938931"/>
<dbReference type="KEGG" id="bsu:BSU23380"/>
<dbReference type="PATRIC" id="fig|224308.179.peg.2547"/>
<dbReference type="eggNOG" id="COG0019">
    <property type="taxonomic scope" value="Bacteria"/>
</dbReference>
<dbReference type="InParanoid" id="P23630"/>
<dbReference type="OrthoDB" id="9802241at2"/>
<dbReference type="PhylomeDB" id="P23630"/>
<dbReference type="BioCyc" id="BSUB:BSU23380-MONOMER"/>
<dbReference type="BioCyc" id="MetaCyc:MONOMER-6601"/>
<dbReference type="UniPathway" id="UPA00034">
    <property type="reaction ID" value="UER00027"/>
</dbReference>
<dbReference type="Proteomes" id="UP000001570">
    <property type="component" value="Chromosome"/>
</dbReference>
<dbReference type="GO" id="GO:0008836">
    <property type="term" value="F:diaminopimelate decarboxylase activity"/>
    <property type="evidence" value="ECO:0000318"/>
    <property type="project" value="GO_Central"/>
</dbReference>
<dbReference type="GO" id="GO:0030170">
    <property type="term" value="F:pyridoxal phosphate binding"/>
    <property type="evidence" value="ECO:0007669"/>
    <property type="project" value="UniProtKB-UniRule"/>
</dbReference>
<dbReference type="GO" id="GO:0009089">
    <property type="term" value="P:lysine biosynthetic process via diaminopimelate"/>
    <property type="evidence" value="ECO:0000318"/>
    <property type="project" value="GO_Central"/>
</dbReference>
<dbReference type="CDD" id="cd06828">
    <property type="entry name" value="PLPDE_III_DapDC"/>
    <property type="match status" value="1"/>
</dbReference>
<dbReference type="FunFam" id="2.40.37.10:FF:000003">
    <property type="entry name" value="Diaminopimelate decarboxylase"/>
    <property type="match status" value="1"/>
</dbReference>
<dbReference type="FunFam" id="3.20.20.10:FF:000003">
    <property type="entry name" value="Diaminopimelate decarboxylase"/>
    <property type="match status" value="1"/>
</dbReference>
<dbReference type="Gene3D" id="3.20.20.10">
    <property type="entry name" value="Alanine racemase"/>
    <property type="match status" value="1"/>
</dbReference>
<dbReference type="Gene3D" id="2.40.37.10">
    <property type="entry name" value="Lyase, Ornithine Decarboxylase, Chain A, domain 1"/>
    <property type="match status" value="1"/>
</dbReference>
<dbReference type="HAMAP" id="MF_02120">
    <property type="entry name" value="LysA"/>
    <property type="match status" value="1"/>
</dbReference>
<dbReference type="InterPro" id="IPR009006">
    <property type="entry name" value="Ala_racemase/Decarboxylase_C"/>
</dbReference>
<dbReference type="InterPro" id="IPR002986">
    <property type="entry name" value="DAP_deCOOHase_LysA"/>
</dbReference>
<dbReference type="InterPro" id="IPR022643">
    <property type="entry name" value="De-COase2_C"/>
</dbReference>
<dbReference type="InterPro" id="IPR022657">
    <property type="entry name" value="De-COase2_CS"/>
</dbReference>
<dbReference type="InterPro" id="IPR022644">
    <property type="entry name" value="De-COase2_N"/>
</dbReference>
<dbReference type="InterPro" id="IPR022653">
    <property type="entry name" value="De-COase2_pyr-phos_BS"/>
</dbReference>
<dbReference type="InterPro" id="IPR000183">
    <property type="entry name" value="Orn/DAP/Arg_de-COase"/>
</dbReference>
<dbReference type="InterPro" id="IPR029066">
    <property type="entry name" value="PLP-binding_barrel"/>
</dbReference>
<dbReference type="NCBIfam" id="TIGR01048">
    <property type="entry name" value="lysA"/>
    <property type="match status" value="1"/>
</dbReference>
<dbReference type="PANTHER" id="PTHR43727">
    <property type="entry name" value="DIAMINOPIMELATE DECARBOXYLASE"/>
    <property type="match status" value="1"/>
</dbReference>
<dbReference type="PANTHER" id="PTHR43727:SF2">
    <property type="entry name" value="GROUP IV DECARBOXYLASE"/>
    <property type="match status" value="1"/>
</dbReference>
<dbReference type="Pfam" id="PF02784">
    <property type="entry name" value="Orn_Arg_deC_N"/>
    <property type="match status" value="1"/>
</dbReference>
<dbReference type="Pfam" id="PF00278">
    <property type="entry name" value="Orn_DAP_Arg_deC"/>
    <property type="match status" value="1"/>
</dbReference>
<dbReference type="PRINTS" id="PR01181">
    <property type="entry name" value="DAPDCRBXLASE"/>
</dbReference>
<dbReference type="PRINTS" id="PR01179">
    <property type="entry name" value="ODADCRBXLASE"/>
</dbReference>
<dbReference type="SUPFAM" id="SSF50621">
    <property type="entry name" value="Alanine racemase C-terminal domain-like"/>
    <property type="match status" value="1"/>
</dbReference>
<dbReference type="SUPFAM" id="SSF51419">
    <property type="entry name" value="PLP-binding barrel"/>
    <property type="match status" value="1"/>
</dbReference>
<dbReference type="PROSITE" id="PS00878">
    <property type="entry name" value="ODR_DC_2_1"/>
    <property type="match status" value="1"/>
</dbReference>
<dbReference type="PROSITE" id="PS00879">
    <property type="entry name" value="ODR_DC_2_2"/>
    <property type="match status" value="1"/>
</dbReference>
<sequence length="439" mass="48574">MFLHGTSRQNQHGHLEIGGVDALYLAEKYGTPLYVYDVALIRERAKSFKQAFISAGLKAQVAYASKAFSSVAMIQLAEEEGLSLDVVSGGELYTAVAAGFPAERIHFHGNNKSREELRMALEHRIGCIVVDNFYEIALLEDLCKETGHSIDVLLRITPGVEAHTHDYITTGQEDSKFGFDLHNGQTERAIEQVLQSEHIQLLGVHCHIGSQIFDTAGFVLAAEKIFKKLDEWRDSYSFVSKVLNLGGGFGIRYTEDDEPLHATEYVEKIIEAVKENASRYGFDIPEIWIEPGRSLVGDAGTTLYTVGSQKEVPGVRQYVAVDGGMNDNIRPALYQAKYEAAAANRIGEAHDKTVSIAGKCCESGDMLIWDIDLPEVKEGDLLAVFCTGAYGYSMANNYNRIPRPAVVFVENGEAHLVVKRETYEDIVKLDLPFKTGVKQ</sequence>
<gene>
    <name evidence="2" type="primary">lysA</name>
    <name type="synonym">lys</name>
    <name type="ordered locus">BSU23380</name>
</gene>
<feature type="chain" id="PRO_0000149915" description="Diaminopimelate decarboxylase">
    <location>
        <begin position="1"/>
        <end position="439"/>
    </location>
</feature>
<feature type="active site" description="Proton donor" evidence="1">
    <location>
        <position position="361"/>
    </location>
</feature>
<feature type="binding site" evidence="2">
    <location>
        <position position="248"/>
    </location>
    <ligand>
        <name>pyridoxal 5'-phosphate</name>
        <dbReference type="ChEBI" id="CHEBI:597326"/>
    </ligand>
</feature>
<feature type="binding site" evidence="2">
    <location>
        <begin position="290"/>
        <end position="293"/>
    </location>
    <ligand>
        <name>pyridoxal 5'-phosphate</name>
        <dbReference type="ChEBI" id="CHEBI:597326"/>
    </ligand>
</feature>
<feature type="binding site" evidence="2">
    <location>
        <position position="293"/>
    </location>
    <ligand>
        <name>substrate</name>
    </ligand>
</feature>
<feature type="binding site" evidence="2">
    <location>
        <position position="330"/>
    </location>
    <ligand>
        <name>substrate</name>
    </ligand>
</feature>
<feature type="binding site" evidence="2">
    <location>
        <position position="334"/>
    </location>
    <ligand>
        <name>substrate</name>
    </ligand>
</feature>
<feature type="binding site" evidence="2">
    <location>
        <position position="362"/>
    </location>
    <ligand>
        <name>substrate</name>
    </ligand>
</feature>
<feature type="binding site" evidence="2">
    <location>
        <position position="390"/>
    </location>
    <ligand>
        <name>pyridoxal 5'-phosphate</name>
        <dbReference type="ChEBI" id="CHEBI:597326"/>
    </ligand>
</feature>
<feature type="binding site" evidence="2">
    <location>
        <position position="390"/>
    </location>
    <ligand>
        <name>substrate</name>
    </ligand>
</feature>
<feature type="modified residue" description="N6-(pyridoxal phosphate)lysine" evidence="2">
    <location>
        <position position="66"/>
    </location>
</feature>
<feature type="sequence conflict" description="In Ref. 3; BAA14211." evidence="3" ref="3">
    <original>GELYTAVAAGFPAERIHFHGNNKSREELRMALEHRIGCIVVDNFYEIA</original>
    <variation>ESYIRLLQQAFRQNASTFMETIRAGKNCGWRLSTASAALWWIISMKSS</variation>
    <location>
        <begin position="90"/>
        <end position="137"/>
    </location>
</feature>
<feature type="sequence conflict" description="In Ref. 3; BAA14211." evidence="3" ref="3">
    <original>G</original>
    <variation>R</variation>
    <location>
        <position position="159"/>
    </location>
</feature>
<feature type="sequence conflict" description="In Ref. 3; BAA14211." evidence="3" ref="3">
    <original>FCTG</original>
    <variation>LYR</variation>
    <location>
        <begin position="385"/>
        <end position="388"/>
    </location>
</feature>
<comment type="function">
    <text evidence="2">Specifically catalyzes the decarboxylation of meso-diaminopimelate (meso-DAP) to L-lysine.</text>
</comment>
<comment type="catalytic activity">
    <reaction evidence="2">
        <text>meso-2,6-diaminopimelate + H(+) = L-lysine + CO2</text>
        <dbReference type="Rhea" id="RHEA:15101"/>
        <dbReference type="ChEBI" id="CHEBI:15378"/>
        <dbReference type="ChEBI" id="CHEBI:16526"/>
        <dbReference type="ChEBI" id="CHEBI:32551"/>
        <dbReference type="ChEBI" id="CHEBI:57791"/>
        <dbReference type="EC" id="4.1.1.20"/>
    </reaction>
</comment>
<comment type="cofactor">
    <cofactor evidence="2">
        <name>pyridoxal 5'-phosphate</name>
        <dbReference type="ChEBI" id="CHEBI:597326"/>
    </cofactor>
</comment>
<comment type="pathway">
    <text evidence="2">Amino-acid biosynthesis; L-lysine biosynthesis via DAP pathway; L-lysine from DL-2,6-diaminopimelate: step 1/1.</text>
</comment>
<comment type="subunit">
    <text evidence="2">Homodimer.</text>
</comment>
<comment type="similarity">
    <text evidence="2">Belongs to the Orn/Lys/Arg decarboxylase class-II family. LysA subfamily.</text>
</comment>
<comment type="sequence caution" evidence="3">
    <conflict type="erroneous initiation">
        <sequence resource="EMBL-CDS" id="BAA12662"/>
    </conflict>
</comment>
<comment type="sequence caution" evidence="3">
    <conflict type="erroneous initiation">
        <sequence resource="EMBL-CDS" id="BAA14211"/>
    </conflict>
</comment>
<keyword id="KW-0028">Amino-acid biosynthesis</keyword>
<keyword id="KW-0210">Decarboxylase</keyword>
<keyword id="KW-0456">Lyase</keyword>
<keyword id="KW-0457">Lysine biosynthesis</keyword>
<keyword id="KW-0663">Pyridoxal phosphate</keyword>
<keyword id="KW-1185">Reference proteome</keyword>
<evidence type="ECO:0000255" key="1"/>
<evidence type="ECO:0000255" key="2">
    <source>
        <dbReference type="HAMAP-Rule" id="MF_02120"/>
    </source>
</evidence>
<evidence type="ECO:0000305" key="3"/>
<organism>
    <name type="scientific">Bacillus subtilis (strain 168)</name>
    <dbReference type="NCBI Taxonomy" id="224308"/>
    <lineage>
        <taxon>Bacteria</taxon>
        <taxon>Bacillati</taxon>
        <taxon>Bacillota</taxon>
        <taxon>Bacilli</taxon>
        <taxon>Bacillales</taxon>
        <taxon>Bacillaceae</taxon>
        <taxon>Bacillus</taxon>
    </lineage>
</organism>
<name>DCDA_BACSU</name>
<proteinExistence type="inferred from homology"/>
<reference key="1">
    <citation type="journal article" date="1989" name="Nucleic Acids Res.">
        <title>Nucleotide sequence of the diaminopimelate-decarboxylase gene from Bacillus subtilis.</title>
        <authorList>
            <person name="Yamamoto J."/>
            <person name="Shimizu M."/>
            <person name="Yamane K."/>
        </authorList>
    </citation>
    <scope>PRELIMINARY NUCLEOTIDE SEQUENCE [GENOMIC DNA]</scope>
</reference>
<reference key="2">
    <citation type="journal article" date="1993" name="Mol. Microbiol.">
        <title>The organization of the Bacillus subtilis 168 chromosome region between the spoVA and serA genetic loci, based on sequence data.</title>
        <authorList>
            <person name="Sorokin A.V."/>
            <person name="Zumstein E."/>
            <person name="Azevedo V."/>
            <person name="Ehrlich S.D."/>
            <person name="Serror P."/>
        </authorList>
    </citation>
    <scope>NUCLEOTIDE SEQUENCE [GENOMIC DNA]</scope>
    <source>
        <strain>168 / Marburg / ATCC 6051 / DSM 10 / JCM 1465 / NBRC 13719 / NCIMB 3610 / NRRL NRS-744 / VKM B-501</strain>
    </source>
</reference>
<reference key="3">
    <citation type="journal article" date="1991" name="Agric. Biol. Chem.">
        <title>Molecular cloning and analysis of nucleotide sequence of the Bacillus subtilis lysA gene region using B. subtilis phage vectors and a multi-copy plasmid, pUB110.</title>
        <authorList>
            <person name="Yamamoto J."/>
            <person name="Shimizu M."/>
            <person name="Yamane K."/>
        </authorList>
    </citation>
    <scope>NUCLEOTIDE SEQUENCE [GENOMIC DNA]</scope>
</reference>
<reference key="4">
    <citation type="journal article" date="1996" name="Microbiology">
        <title>Systematic sequencing of the 283 kb 210 degrees-232 degrees region of the Bacillus subtilis genome containing the skin element and many sporulation genes.</title>
        <authorList>
            <person name="Mizuno M."/>
            <person name="Masuda S."/>
            <person name="Takemaru K."/>
            <person name="Hosono S."/>
            <person name="Sato T."/>
            <person name="Takeuchi M."/>
            <person name="Kobayashi Y."/>
        </authorList>
    </citation>
    <scope>NUCLEOTIDE SEQUENCE [GENOMIC DNA]</scope>
    <source>
        <strain>168 / JH642</strain>
    </source>
</reference>
<reference key="5">
    <citation type="journal article" date="1997" name="Nature">
        <title>The complete genome sequence of the Gram-positive bacterium Bacillus subtilis.</title>
        <authorList>
            <person name="Kunst F."/>
            <person name="Ogasawara N."/>
            <person name="Moszer I."/>
            <person name="Albertini A.M."/>
            <person name="Alloni G."/>
            <person name="Azevedo V."/>
            <person name="Bertero M.G."/>
            <person name="Bessieres P."/>
            <person name="Bolotin A."/>
            <person name="Borchert S."/>
            <person name="Borriss R."/>
            <person name="Boursier L."/>
            <person name="Brans A."/>
            <person name="Braun M."/>
            <person name="Brignell S.C."/>
            <person name="Bron S."/>
            <person name="Brouillet S."/>
            <person name="Bruschi C.V."/>
            <person name="Caldwell B."/>
            <person name="Capuano V."/>
            <person name="Carter N.M."/>
            <person name="Choi S.-K."/>
            <person name="Codani J.-J."/>
            <person name="Connerton I.F."/>
            <person name="Cummings N.J."/>
            <person name="Daniel R.A."/>
            <person name="Denizot F."/>
            <person name="Devine K.M."/>
            <person name="Duesterhoeft A."/>
            <person name="Ehrlich S.D."/>
            <person name="Emmerson P.T."/>
            <person name="Entian K.-D."/>
            <person name="Errington J."/>
            <person name="Fabret C."/>
            <person name="Ferrari E."/>
            <person name="Foulger D."/>
            <person name="Fritz C."/>
            <person name="Fujita M."/>
            <person name="Fujita Y."/>
            <person name="Fuma S."/>
            <person name="Galizzi A."/>
            <person name="Galleron N."/>
            <person name="Ghim S.-Y."/>
            <person name="Glaser P."/>
            <person name="Goffeau A."/>
            <person name="Golightly E.J."/>
            <person name="Grandi G."/>
            <person name="Guiseppi G."/>
            <person name="Guy B.J."/>
            <person name="Haga K."/>
            <person name="Haiech J."/>
            <person name="Harwood C.R."/>
            <person name="Henaut A."/>
            <person name="Hilbert H."/>
            <person name="Holsappel S."/>
            <person name="Hosono S."/>
            <person name="Hullo M.-F."/>
            <person name="Itaya M."/>
            <person name="Jones L.-M."/>
            <person name="Joris B."/>
            <person name="Karamata D."/>
            <person name="Kasahara Y."/>
            <person name="Klaerr-Blanchard M."/>
            <person name="Klein C."/>
            <person name="Kobayashi Y."/>
            <person name="Koetter P."/>
            <person name="Koningstein G."/>
            <person name="Krogh S."/>
            <person name="Kumano M."/>
            <person name="Kurita K."/>
            <person name="Lapidus A."/>
            <person name="Lardinois S."/>
            <person name="Lauber J."/>
            <person name="Lazarevic V."/>
            <person name="Lee S.-M."/>
            <person name="Levine A."/>
            <person name="Liu H."/>
            <person name="Masuda S."/>
            <person name="Mauel C."/>
            <person name="Medigue C."/>
            <person name="Medina N."/>
            <person name="Mellado R.P."/>
            <person name="Mizuno M."/>
            <person name="Moestl D."/>
            <person name="Nakai S."/>
            <person name="Noback M."/>
            <person name="Noone D."/>
            <person name="O'Reilly M."/>
            <person name="Ogawa K."/>
            <person name="Ogiwara A."/>
            <person name="Oudega B."/>
            <person name="Park S.-H."/>
            <person name="Parro V."/>
            <person name="Pohl T.M."/>
            <person name="Portetelle D."/>
            <person name="Porwollik S."/>
            <person name="Prescott A.M."/>
            <person name="Presecan E."/>
            <person name="Pujic P."/>
            <person name="Purnelle B."/>
            <person name="Rapoport G."/>
            <person name="Rey M."/>
            <person name="Reynolds S."/>
            <person name="Rieger M."/>
            <person name="Rivolta C."/>
            <person name="Rocha E."/>
            <person name="Roche B."/>
            <person name="Rose M."/>
            <person name="Sadaie Y."/>
            <person name="Sato T."/>
            <person name="Scanlan E."/>
            <person name="Schleich S."/>
            <person name="Schroeter R."/>
            <person name="Scoffone F."/>
            <person name="Sekiguchi J."/>
            <person name="Sekowska A."/>
            <person name="Seror S.J."/>
            <person name="Serror P."/>
            <person name="Shin B.-S."/>
            <person name="Soldo B."/>
            <person name="Sorokin A."/>
            <person name="Tacconi E."/>
            <person name="Takagi T."/>
            <person name="Takahashi H."/>
            <person name="Takemaru K."/>
            <person name="Takeuchi M."/>
            <person name="Tamakoshi A."/>
            <person name="Tanaka T."/>
            <person name="Terpstra P."/>
            <person name="Tognoni A."/>
            <person name="Tosato V."/>
            <person name="Uchiyama S."/>
            <person name="Vandenbol M."/>
            <person name="Vannier F."/>
            <person name="Vassarotti A."/>
            <person name="Viari A."/>
            <person name="Wambutt R."/>
            <person name="Wedler E."/>
            <person name="Wedler H."/>
            <person name="Weitzenegger T."/>
            <person name="Winters P."/>
            <person name="Wipat A."/>
            <person name="Yamamoto H."/>
            <person name="Yamane K."/>
            <person name="Yasumoto K."/>
            <person name="Yata K."/>
            <person name="Yoshida K."/>
            <person name="Yoshikawa H.-F."/>
            <person name="Zumstein E."/>
            <person name="Yoshikawa H."/>
            <person name="Danchin A."/>
        </authorList>
    </citation>
    <scope>NUCLEOTIDE SEQUENCE [LARGE SCALE GENOMIC DNA]</scope>
    <source>
        <strain>168</strain>
    </source>
</reference>
<accession>P23630</accession>
<protein>
    <recommendedName>
        <fullName evidence="2">Diaminopimelate decarboxylase</fullName>
        <shortName evidence="2">DAP decarboxylase</shortName>
        <shortName evidence="2">DAPDC</shortName>
        <ecNumber evidence="2">4.1.1.20</ecNumber>
    </recommendedName>
</protein>